<evidence type="ECO:0000255" key="1">
    <source>
        <dbReference type="HAMAP-Rule" id="MF_01310"/>
    </source>
</evidence>
<evidence type="ECO:0000305" key="2"/>
<comment type="function">
    <text evidence="1">Located on the platform of the 30S subunit, it bridges several disparate RNA helices of the 16S rRNA. Forms part of the Shine-Dalgarno cleft in the 70S ribosome.</text>
</comment>
<comment type="subunit">
    <text evidence="1">Part of the 30S ribosomal subunit. Interacts with proteins S7 and S18. Binds to IF-3.</text>
</comment>
<comment type="similarity">
    <text evidence="1">Belongs to the universal ribosomal protein uS11 family.</text>
</comment>
<reference key="1">
    <citation type="journal article" date="2009" name="Environ. Microbiol.">
        <title>Contribution of mobile genetic elements to Desulfovibrio vulgaris genome plasticity.</title>
        <authorList>
            <person name="Walker C.B."/>
            <person name="Stolyar S."/>
            <person name="Chivian D."/>
            <person name="Pinel N."/>
            <person name="Gabster J.A."/>
            <person name="Dehal P.S."/>
            <person name="He Z."/>
            <person name="Yang Z.K."/>
            <person name="Yen H.C."/>
            <person name="Zhou J."/>
            <person name="Wall J.D."/>
            <person name="Hazen T.C."/>
            <person name="Arkin A.P."/>
            <person name="Stahl D.A."/>
        </authorList>
    </citation>
    <scope>NUCLEOTIDE SEQUENCE [LARGE SCALE GENOMIC DNA]</scope>
    <source>
        <strain>DP4</strain>
    </source>
</reference>
<gene>
    <name evidence="1" type="primary">rpsK</name>
    <name type="ordered locus">Dvul_1741</name>
</gene>
<name>RS11_NITV4</name>
<feature type="chain" id="PRO_0000294747" description="Small ribosomal subunit protein uS11">
    <location>
        <begin position="1"/>
        <end position="129"/>
    </location>
</feature>
<organism>
    <name type="scientific">Nitratidesulfovibrio vulgaris (strain DP4)</name>
    <name type="common">Desulfovibrio vulgaris</name>
    <dbReference type="NCBI Taxonomy" id="391774"/>
    <lineage>
        <taxon>Bacteria</taxon>
        <taxon>Pseudomonadati</taxon>
        <taxon>Thermodesulfobacteriota</taxon>
        <taxon>Desulfovibrionia</taxon>
        <taxon>Desulfovibrionales</taxon>
        <taxon>Desulfovibrionaceae</taxon>
        <taxon>Nitratidesulfovibrio</taxon>
    </lineage>
</organism>
<keyword id="KW-0687">Ribonucleoprotein</keyword>
<keyword id="KW-0689">Ribosomal protein</keyword>
<keyword id="KW-0694">RNA-binding</keyword>
<keyword id="KW-0699">rRNA-binding</keyword>
<proteinExistence type="inferred from homology"/>
<accession>A1VE92</accession>
<dbReference type="EMBL" id="CP000527">
    <property type="protein sequence ID" value="ABM28758.1"/>
    <property type="molecule type" value="Genomic_DNA"/>
</dbReference>
<dbReference type="RefSeq" id="WP_010938622.1">
    <property type="nucleotide sequence ID" value="NC_008751.1"/>
</dbReference>
<dbReference type="SMR" id="A1VE92"/>
<dbReference type="KEGG" id="dvl:Dvul_1741"/>
<dbReference type="HOGENOM" id="CLU_072439_5_0_7"/>
<dbReference type="Proteomes" id="UP000009173">
    <property type="component" value="Chromosome"/>
</dbReference>
<dbReference type="GO" id="GO:1990904">
    <property type="term" value="C:ribonucleoprotein complex"/>
    <property type="evidence" value="ECO:0007669"/>
    <property type="project" value="UniProtKB-KW"/>
</dbReference>
<dbReference type="GO" id="GO:0005840">
    <property type="term" value="C:ribosome"/>
    <property type="evidence" value="ECO:0007669"/>
    <property type="project" value="UniProtKB-KW"/>
</dbReference>
<dbReference type="GO" id="GO:0019843">
    <property type="term" value="F:rRNA binding"/>
    <property type="evidence" value="ECO:0007669"/>
    <property type="project" value="UniProtKB-UniRule"/>
</dbReference>
<dbReference type="GO" id="GO:0003735">
    <property type="term" value="F:structural constituent of ribosome"/>
    <property type="evidence" value="ECO:0007669"/>
    <property type="project" value="InterPro"/>
</dbReference>
<dbReference type="GO" id="GO:0006412">
    <property type="term" value="P:translation"/>
    <property type="evidence" value="ECO:0007669"/>
    <property type="project" value="UniProtKB-UniRule"/>
</dbReference>
<dbReference type="FunFam" id="3.30.420.80:FF:000001">
    <property type="entry name" value="30S ribosomal protein S11"/>
    <property type="match status" value="1"/>
</dbReference>
<dbReference type="Gene3D" id="3.30.420.80">
    <property type="entry name" value="Ribosomal protein S11"/>
    <property type="match status" value="1"/>
</dbReference>
<dbReference type="HAMAP" id="MF_01310">
    <property type="entry name" value="Ribosomal_uS11"/>
    <property type="match status" value="1"/>
</dbReference>
<dbReference type="InterPro" id="IPR001971">
    <property type="entry name" value="Ribosomal_uS11"/>
</dbReference>
<dbReference type="InterPro" id="IPR019981">
    <property type="entry name" value="Ribosomal_uS11_bac-type"/>
</dbReference>
<dbReference type="InterPro" id="IPR018102">
    <property type="entry name" value="Ribosomal_uS11_CS"/>
</dbReference>
<dbReference type="InterPro" id="IPR036967">
    <property type="entry name" value="Ribosomal_uS11_sf"/>
</dbReference>
<dbReference type="NCBIfam" id="NF003698">
    <property type="entry name" value="PRK05309.1"/>
    <property type="match status" value="1"/>
</dbReference>
<dbReference type="NCBIfam" id="TIGR03632">
    <property type="entry name" value="uS11_bact"/>
    <property type="match status" value="1"/>
</dbReference>
<dbReference type="PANTHER" id="PTHR11759">
    <property type="entry name" value="40S RIBOSOMAL PROTEIN S14/30S RIBOSOMAL PROTEIN S11"/>
    <property type="match status" value="1"/>
</dbReference>
<dbReference type="Pfam" id="PF00411">
    <property type="entry name" value="Ribosomal_S11"/>
    <property type="match status" value="1"/>
</dbReference>
<dbReference type="PIRSF" id="PIRSF002131">
    <property type="entry name" value="Ribosomal_S11"/>
    <property type="match status" value="1"/>
</dbReference>
<dbReference type="SUPFAM" id="SSF53137">
    <property type="entry name" value="Translational machinery components"/>
    <property type="match status" value="1"/>
</dbReference>
<dbReference type="PROSITE" id="PS00054">
    <property type="entry name" value="RIBOSOMAL_S11"/>
    <property type="match status" value="1"/>
</dbReference>
<protein>
    <recommendedName>
        <fullName evidence="1">Small ribosomal subunit protein uS11</fullName>
    </recommendedName>
    <alternativeName>
        <fullName evidence="2">30S ribosomal protein S11</fullName>
    </alternativeName>
</protein>
<sequence>MARPKRTVKKREKKNVPVGLAHIQATFNNTIVTFTDTRGNTISWASAGQSGFKGSRKSTPFAAQMAAEQAAKKAQENGMRTVGIYVKGPGSGREAAMRAINAAGFKVAFIRDITPIPHNGCRPPKRRRV</sequence>